<reference key="1">
    <citation type="journal article" date="1986" name="J. Biol. Chem.">
        <title>Molecular cloning of the cDNA for a growth factor-inducible gene with strong homology to S-100, a calcium-binding protein.</title>
        <authorList>
            <person name="Calabretta B."/>
            <person name="Battini R."/>
            <person name="Kaczmarek L."/>
            <person name="de Riel J.K."/>
            <person name="Baserga R."/>
        </authorList>
    </citation>
    <scope>NUCLEOTIDE SEQUENCE [MRNA]</scope>
    <source>
        <tissue>Fibroblast</tissue>
    </source>
</reference>
<reference key="2">
    <citation type="journal article" date="1987" name="J. Biol. Chem.">
        <title>Structural and functional analysis of a growth-regulated gene, the human calcyclin.</title>
        <authorList>
            <person name="Ferrari S."/>
            <person name="Calabretta B."/>
            <person name="Deriel J.K."/>
            <person name="Battini R."/>
            <person name="Ghezzo F."/>
            <person name="Lauret E."/>
            <person name="Griffin C."/>
            <person name="Emanuel B.S."/>
            <person name="Gurrieri F."/>
            <person name="Baserga R."/>
        </authorList>
    </citation>
    <scope>NUCLEOTIDE SEQUENCE [GENOMIC DNA]</scope>
</reference>
<reference key="3">
    <citation type="journal article" date="1988" name="J. Biol. Chem.">
        <title>Cloning and characterization of a cDNA encoding a highly conserved, putative calcium binding protein, identified by an anti-prolactin receptor antiserum.</title>
        <authorList>
            <person name="Murphy L.C."/>
            <person name="Murphy L.J."/>
            <person name="Tsuyuki D."/>
            <person name="Duckworth M.L."/>
            <person name="Shiu R.P.C."/>
        </authorList>
    </citation>
    <scope>NUCLEOTIDE SEQUENCE [MRNA]</scope>
</reference>
<reference key="4">
    <citation type="submission" date="2001-05" db="EMBL/GenBank/DDBJ databases">
        <title>Cloning of human calcyclin and calcyclin binding protein (CacyBP).</title>
        <authorList>
            <person name="Wu J."/>
            <person name="Liu W."/>
            <person name="Zhou Y."/>
            <person name="Zhao Z."/>
            <person name="Peng X."/>
            <person name="Yuan J."/>
            <person name="Qiang B."/>
        </authorList>
    </citation>
    <scope>NUCLEOTIDE SEQUENCE [GENOMIC DNA]</scope>
</reference>
<reference key="5">
    <citation type="submission" date="2003-05" db="EMBL/GenBank/DDBJ databases">
        <title>Cloning of human full-length CDSs in BD Creator(TM) system donor vector.</title>
        <authorList>
            <person name="Kalnine N."/>
            <person name="Chen X."/>
            <person name="Rolfs A."/>
            <person name="Halleck A."/>
            <person name="Hines L."/>
            <person name="Eisenstein S."/>
            <person name="Koundinya M."/>
            <person name="Raphael J."/>
            <person name="Moreira D."/>
            <person name="Kelley T."/>
            <person name="LaBaer J."/>
            <person name="Lin Y."/>
            <person name="Phelan M."/>
            <person name="Farmer A."/>
        </authorList>
    </citation>
    <scope>NUCLEOTIDE SEQUENCE [LARGE SCALE MRNA]</scope>
</reference>
<reference key="6">
    <citation type="journal article" date="2006" name="Nature">
        <title>The DNA sequence and biological annotation of human chromosome 1.</title>
        <authorList>
            <person name="Gregory S.G."/>
            <person name="Barlow K.F."/>
            <person name="McLay K.E."/>
            <person name="Kaul R."/>
            <person name="Swarbreck D."/>
            <person name="Dunham A."/>
            <person name="Scott C.E."/>
            <person name="Howe K.L."/>
            <person name="Woodfine K."/>
            <person name="Spencer C.C.A."/>
            <person name="Jones M.C."/>
            <person name="Gillson C."/>
            <person name="Searle S."/>
            <person name="Zhou Y."/>
            <person name="Kokocinski F."/>
            <person name="McDonald L."/>
            <person name="Evans R."/>
            <person name="Phillips K."/>
            <person name="Atkinson A."/>
            <person name="Cooper R."/>
            <person name="Jones C."/>
            <person name="Hall R.E."/>
            <person name="Andrews T.D."/>
            <person name="Lloyd C."/>
            <person name="Ainscough R."/>
            <person name="Almeida J.P."/>
            <person name="Ambrose K.D."/>
            <person name="Anderson F."/>
            <person name="Andrew R.W."/>
            <person name="Ashwell R.I.S."/>
            <person name="Aubin K."/>
            <person name="Babbage A.K."/>
            <person name="Bagguley C.L."/>
            <person name="Bailey J."/>
            <person name="Beasley H."/>
            <person name="Bethel G."/>
            <person name="Bird C.P."/>
            <person name="Bray-Allen S."/>
            <person name="Brown J.Y."/>
            <person name="Brown A.J."/>
            <person name="Buckley D."/>
            <person name="Burton J."/>
            <person name="Bye J."/>
            <person name="Carder C."/>
            <person name="Chapman J.C."/>
            <person name="Clark S.Y."/>
            <person name="Clarke G."/>
            <person name="Clee C."/>
            <person name="Cobley V."/>
            <person name="Collier R.E."/>
            <person name="Corby N."/>
            <person name="Coville G.J."/>
            <person name="Davies J."/>
            <person name="Deadman R."/>
            <person name="Dunn M."/>
            <person name="Earthrowl M."/>
            <person name="Ellington A.G."/>
            <person name="Errington H."/>
            <person name="Frankish A."/>
            <person name="Frankland J."/>
            <person name="French L."/>
            <person name="Garner P."/>
            <person name="Garnett J."/>
            <person name="Gay L."/>
            <person name="Ghori M.R.J."/>
            <person name="Gibson R."/>
            <person name="Gilby L.M."/>
            <person name="Gillett W."/>
            <person name="Glithero R.J."/>
            <person name="Grafham D.V."/>
            <person name="Griffiths C."/>
            <person name="Griffiths-Jones S."/>
            <person name="Grocock R."/>
            <person name="Hammond S."/>
            <person name="Harrison E.S.I."/>
            <person name="Hart E."/>
            <person name="Haugen E."/>
            <person name="Heath P.D."/>
            <person name="Holmes S."/>
            <person name="Holt K."/>
            <person name="Howden P.J."/>
            <person name="Hunt A.R."/>
            <person name="Hunt S.E."/>
            <person name="Hunter G."/>
            <person name="Isherwood J."/>
            <person name="James R."/>
            <person name="Johnson C."/>
            <person name="Johnson D."/>
            <person name="Joy A."/>
            <person name="Kay M."/>
            <person name="Kershaw J.K."/>
            <person name="Kibukawa M."/>
            <person name="Kimberley A.M."/>
            <person name="King A."/>
            <person name="Knights A.J."/>
            <person name="Lad H."/>
            <person name="Laird G."/>
            <person name="Lawlor S."/>
            <person name="Leongamornlert D.A."/>
            <person name="Lloyd D.M."/>
            <person name="Loveland J."/>
            <person name="Lovell J."/>
            <person name="Lush M.J."/>
            <person name="Lyne R."/>
            <person name="Martin S."/>
            <person name="Mashreghi-Mohammadi M."/>
            <person name="Matthews L."/>
            <person name="Matthews N.S.W."/>
            <person name="McLaren S."/>
            <person name="Milne S."/>
            <person name="Mistry S."/>
            <person name="Moore M.J.F."/>
            <person name="Nickerson T."/>
            <person name="O'Dell C.N."/>
            <person name="Oliver K."/>
            <person name="Palmeiri A."/>
            <person name="Palmer S.A."/>
            <person name="Parker A."/>
            <person name="Patel D."/>
            <person name="Pearce A.V."/>
            <person name="Peck A.I."/>
            <person name="Pelan S."/>
            <person name="Phelps K."/>
            <person name="Phillimore B.J."/>
            <person name="Plumb R."/>
            <person name="Rajan J."/>
            <person name="Raymond C."/>
            <person name="Rouse G."/>
            <person name="Saenphimmachak C."/>
            <person name="Sehra H.K."/>
            <person name="Sheridan E."/>
            <person name="Shownkeen R."/>
            <person name="Sims S."/>
            <person name="Skuce C.D."/>
            <person name="Smith M."/>
            <person name="Steward C."/>
            <person name="Subramanian S."/>
            <person name="Sycamore N."/>
            <person name="Tracey A."/>
            <person name="Tromans A."/>
            <person name="Van Helmond Z."/>
            <person name="Wall M."/>
            <person name="Wallis J.M."/>
            <person name="White S."/>
            <person name="Whitehead S.L."/>
            <person name="Wilkinson J.E."/>
            <person name="Willey D.L."/>
            <person name="Williams H."/>
            <person name="Wilming L."/>
            <person name="Wray P.W."/>
            <person name="Wu Z."/>
            <person name="Coulson A."/>
            <person name="Vaudin M."/>
            <person name="Sulston J.E."/>
            <person name="Durbin R.M."/>
            <person name="Hubbard T."/>
            <person name="Wooster R."/>
            <person name="Dunham I."/>
            <person name="Carter N.P."/>
            <person name="McVean G."/>
            <person name="Ross M.T."/>
            <person name="Harrow J."/>
            <person name="Olson M.V."/>
            <person name="Beck S."/>
            <person name="Rogers J."/>
            <person name="Bentley D.R."/>
        </authorList>
    </citation>
    <scope>NUCLEOTIDE SEQUENCE [LARGE SCALE GENOMIC DNA]</scope>
</reference>
<reference key="7">
    <citation type="submission" date="2005-09" db="EMBL/GenBank/DDBJ databases">
        <authorList>
            <person name="Mural R.J."/>
            <person name="Istrail S."/>
            <person name="Sutton G.G."/>
            <person name="Florea L."/>
            <person name="Halpern A.L."/>
            <person name="Mobarry C.M."/>
            <person name="Lippert R."/>
            <person name="Walenz B."/>
            <person name="Shatkay H."/>
            <person name="Dew I."/>
            <person name="Miller J.R."/>
            <person name="Flanigan M.J."/>
            <person name="Edwards N.J."/>
            <person name="Bolanos R."/>
            <person name="Fasulo D."/>
            <person name="Halldorsson B.V."/>
            <person name="Hannenhalli S."/>
            <person name="Turner R."/>
            <person name="Yooseph S."/>
            <person name="Lu F."/>
            <person name="Nusskern D.R."/>
            <person name="Shue B.C."/>
            <person name="Zheng X.H."/>
            <person name="Zhong F."/>
            <person name="Delcher A.L."/>
            <person name="Huson D.H."/>
            <person name="Kravitz S.A."/>
            <person name="Mouchard L."/>
            <person name="Reinert K."/>
            <person name="Remington K.A."/>
            <person name="Clark A.G."/>
            <person name="Waterman M.S."/>
            <person name="Eichler E.E."/>
            <person name="Adams M.D."/>
            <person name="Hunkapiller M.W."/>
            <person name="Myers E.W."/>
            <person name="Venter J.C."/>
        </authorList>
    </citation>
    <scope>NUCLEOTIDE SEQUENCE [LARGE SCALE GENOMIC DNA]</scope>
</reference>
<reference key="8">
    <citation type="journal article" date="2004" name="Genome Res.">
        <title>The status, quality, and expansion of the NIH full-length cDNA project: the Mammalian Gene Collection (MGC).</title>
        <authorList>
            <consortium name="The MGC Project Team"/>
        </authorList>
    </citation>
    <scope>NUCLEOTIDE SEQUENCE [LARGE SCALE MRNA]</scope>
    <source>
        <tissue>Brain</tissue>
        <tissue>Placenta</tissue>
    </source>
</reference>
<reference key="9">
    <citation type="journal article" date="1992" name="Biochem. Biophys. Res. Commun.">
        <title>Calcyclin and calvasculin exist in human platelets.</title>
        <authorList>
            <person name="Tomida Y."/>
            <person name="Terasawa M."/>
            <person name="Kobayashi R."/>
            <person name="Hidaka H."/>
        </authorList>
    </citation>
    <scope>PROTEIN SEQUENCE OF 27-31 AND 48-89</scope>
    <source>
        <tissue>Platelet</tissue>
    </source>
</reference>
<reference key="10">
    <citation type="journal article" date="1989" name="Biochem. Biophys. Res. Commun.">
        <title>Identification of a cell cycle-dependent gene product as a sialic acid-binding protein.</title>
        <authorList>
            <person name="Gabius H.J."/>
            <person name="Bardosi A."/>
            <person name="Gabius S."/>
            <person name="Hellmann K.P."/>
            <person name="Karas M."/>
            <person name="Kratzin H."/>
        </authorList>
    </citation>
    <scope>PROTEIN SEQUENCE OF 57-74</scope>
</reference>
<reference key="11">
    <citation type="journal article" date="2003" name="J. Biol. Chem.">
        <title>Calcium-regulated interaction of Sgt1 with S100A6 (calcyclin) and other S100 proteins.</title>
        <authorList>
            <person name="Nowotny M."/>
            <person name="Spiechowicz M."/>
            <person name="Jastrzebska B."/>
            <person name="Filipek A."/>
            <person name="Kitagawa K."/>
            <person name="Kuznicki J."/>
        </authorList>
    </citation>
    <scope>INTERACTION WITH SUGT1</scope>
</reference>
<reference key="12">
    <citation type="journal article" date="2003" name="J. Biol. Chem.">
        <title>Calcium- and cell cycle-dependent association of annexin 11 with the nuclear envelope.</title>
        <authorList>
            <person name="Tomas A."/>
            <person name="Moss S.E."/>
        </authorList>
    </citation>
    <scope>SUBCELLULAR LOCATION</scope>
</reference>
<reference key="13">
    <citation type="journal article" date="2009" name="Br. J. Cancer">
        <title>S100A6 binds to annexin 2 in pancreatic cancer cells and promotes pancreatic cancer cell motility.</title>
        <authorList>
            <person name="Nedjadi T."/>
            <person name="Kitteringham N."/>
            <person name="Campbell F."/>
            <person name="Jenkins R.E."/>
            <person name="Park B.K."/>
            <person name="Navarro P."/>
            <person name="Ashcroft F."/>
            <person name="Tepikin A."/>
            <person name="Neoptolemos J.P."/>
            <person name="Costello E."/>
        </authorList>
    </citation>
    <scope>INTERACTION WITH ANXA2; ANXA11 AND TROPOMYOSIN</scope>
    <scope>SUBCELLULAR LOCATION</scope>
</reference>
<reference key="14">
    <citation type="journal article" date="2009" name="J. Mol. Biol.">
        <title>Posttranslational modifications affect the interaction of S100 proteins with tumor suppressor p53.</title>
        <authorList>
            <person name="van Dieck J."/>
            <person name="Teufel D.P."/>
            <person name="Jaulent A.M."/>
            <person name="Fernandez-Fernandez M.R."/>
            <person name="Rutherford T.J."/>
            <person name="Wyslouch-Cieszynska A."/>
            <person name="Fersht A.R."/>
        </authorList>
    </citation>
    <scope>INTERACTION WITH TP53</scope>
</reference>
<reference key="15">
    <citation type="journal article" date="2009" name="Science">
        <title>Lysine acetylation targets protein complexes and co-regulates major cellular functions.</title>
        <authorList>
            <person name="Choudhary C."/>
            <person name="Kumar C."/>
            <person name="Gnad F."/>
            <person name="Nielsen M.L."/>
            <person name="Rehman M."/>
            <person name="Walther T.C."/>
            <person name="Olsen J.V."/>
            <person name="Mann M."/>
        </authorList>
    </citation>
    <scope>ACETYLATION [LARGE SCALE ANALYSIS] AT LYS-40</scope>
    <scope>IDENTIFICATION BY MASS SPECTROMETRY [LARGE SCALE ANALYSIS]</scope>
</reference>
<reference key="16">
    <citation type="journal article" date="2010" name="FEBS Lett.">
        <title>S100 proteins regulate the interaction of Hsp90 with cyclophilin 40 and FKBP52 through their tetratricopeptide repeats.</title>
        <authorList>
            <person name="Shimamoto S."/>
            <person name="Kubota Y."/>
            <person name="Tokumitsu H."/>
            <person name="Kobayashi R."/>
        </authorList>
    </citation>
    <scope>INTERACTION WITH FKBP4</scope>
</reference>
<reference key="17">
    <citation type="journal article" date="2011" name="BMC Syst. Biol.">
        <title>Initial characterization of the human central proteome.</title>
        <authorList>
            <person name="Burkard T.R."/>
            <person name="Planyavsky M."/>
            <person name="Kaupe I."/>
            <person name="Breitwieser F.P."/>
            <person name="Buerckstuemmer T."/>
            <person name="Bennett K.L."/>
            <person name="Superti-Furga G."/>
            <person name="Colinge J."/>
        </authorList>
    </citation>
    <scope>IDENTIFICATION BY MASS SPECTROMETRY [LARGE SCALE ANALYSIS]</scope>
</reference>
<reference key="18">
    <citation type="journal article" date="2012" name="J. Biol. Chem.">
        <title>S100 proteins modulate protein phosphatase 5 function: a link between CA2+ signal transduction and protein dephosphorylation.</title>
        <authorList>
            <person name="Yamaguchi F."/>
            <person name="Umeda Y."/>
            <person name="Shimamoto S."/>
            <person name="Tsuchiya M."/>
            <person name="Tokumitsu H."/>
            <person name="Tokuda M."/>
            <person name="Kobayashi R."/>
        </authorList>
    </citation>
    <scope>FUNCTION</scope>
    <scope>INTERACTION WITH PPP5C</scope>
    <scope>SUBCELLULAR LOCATION</scope>
</reference>
<reference key="19">
    <citation type="journal article" date="2013" name="J. Proteome Res.">
        <title>Toward a comprehensive characterization of a human cancer cell phosphoproteome.</title>
        <authorList>
            <person name="Zhou H."/>
            <person name="Di Palma S."/>
            <person name="Preisinger C."/>
            <person name="Peng M."/>
            <person name="Polat A.N."/>
            <person name="Heck A.J."/>
            <person name="Mohammed S."/>
        </authorList>
    </citation>
    <scope>PHOSPHORYLATION [LARGE SCALE ANALYSIS] AT SER-46</scope>
    <scope>IDENTIFICATION BY MASS SPECTROMETRY [LARGE SCALE ANALYSIS]</scope>
    <source>
        <tissue>Cervix carcinoma</tissue>
    </source>
</reference>
<reference key="20">
    <citation type="journal article" date="2014" name="J. Proteomics">
        <title>An enzyme assisted RP-RPLC approach for in-depth analysis of human liver phosphoproteome.</title>
        <authorList>
            <person name="Bian Y."/>
            <person name="Song C."/>
            <person name="Cheng K."/>
            <person name="Dong M."/>
            <person name="Wang F."/>
            <person name="Huang J."/>
            <person name="Sun D."/>
            <person name="Wang L."/>
            <person name="Ye M."/>
            <person name="Zou H."/>
        </authorList>
    </citation>
    <scope>IDENTIFICATION BY MASS SPECTROMETRY [LARGE SCALE ANALYSIS]</scope>
    <source>
        <tissue>Liver</tissue>
    </source>
</reference>
<reference key="21">
    <citation type="journal article" date="2015" name="Proteomics">
        <title>N-terminome analysis of the human mitochondrial proteome.</title>
        <authorList>
            <person name="Vaca Jacome A.S."/>
            <person name="Rabilloud T."/>
            <person name="Schaeffer-Reiss C."/>
            <person name="Rompais M."/>
            <person name="Ayoub D."/>
            <person name="Lane L."/>
            <person name="Bairoch A."/>
            <person name="Van Dorsselaer A."/>
            <person name="Carapito C."/>
        </authorList>
    </citation>
    <scope>IDENTIFICATION BY MASS SPECTROMETRY [LARGE SCALE ANALYSIS]</scope>
</reference>
<reference key="22">
    <citation type="journal article" date="2017" name="Sci. Transl. Med.">
        <title>Mutations in the vesicular trafficking protein annexin A11 are associated with amyotrophic lateral sclerosis.</title>
        <authorList>
            <person name="Smith B.N."/>
            <person name="Topp S.D."/>
            <person name="Fallini C."/>
            <person name="Shibata H."/>
            <person name="Chen H.J."/>
            <person name="Troakes C."/>
            <person name="King A."/>
            <person name="Ticozzi N."/>
            <person name="Kenna K.P."/>
            <person name="Soragia-Gkazi A."/>
            <person name="Miller J.W."/>
            <person name="Sato A."/>
            <person name="Dias D.M."/>
            <person name="Jeon M."/>
            <person name="Vance C."/>
            <person name="Wong C.H."/>
            <person name="de Majo M."/>
            <person name="Kattuah W."/>
            <person name="Mitchell J.C."/>
            <person name="Scotter E.L."/>
            <person name="Parkin N.W."/>
            <person name="Sapp P.C."/>
            <person name="Nolan M."/>
            <person name="Nestor P.J."/>
            <person name="Simpson M."/>
            <person name="Weale M."/>
            <person name="Lek M."/>
            <person name="Baas F."/>
            <person name="Vianney de Jong J.M."/>
            <person name="Ten Asbroek A.L.M.A."/>
            <person name="Redondo A.G."/>
            <person name="Esteban-Perez J."/>
            <person name="Tiloca C."/>
            <person name="Verde F."/>
            <person name="Duga S."/>
            <person name="Leigh N."/>
            <person name="Pall H."/>
            <person name="Morrison K.E."/>
            <person name="Al-Chalabi A."/>
            <person name="Shaw P.J."/>
            <person name="Kirby J."/>
            <person name="Turner M.R."/>
            <person name="Talbot K."/>
            <person name="Hardiman O."/>
            <person name="Glass J.D."/>
            <person name="De Belleroche J."/>
            <person name="Maki M."/>
            <person name="Moss S.E."/>
            <person name="Miller C."/>
            <person name="Gellera C."/>
            <person name="Ratti A."/>
            <person name="Al-Sarraj S."/>
            <person name="Brown R.H. Jr."/>
            <person name="Silani V."/>
            <person name="Landers J.E."/>
            <person name="Shaw C.E."/>
        </authorList>
    </citation>
    <scope>INTERACTION WITH ANXA11</scope>
</reference>
<reference key="23">
    <citation type="journal article" date="2021" name="Cell Calcium">
        <title>Regulation of the tubulin polymerization-promoting protein by Ca2+/S100 proteins.</title>
        <authorList>
            <person name="Doi S."/>
            <person name="Fujioka N."/>
            <person name="Ohtsuka S."/>
            <person name="Kondo R."/>
            <person name="Yamamoto M."/>
            <person name="Denda M."/>
            <person name="Magari M."/>
            <person name="Kanayama N."/>
            <person name="Hatano N."/>
            <person name="Morishita R."/>
            <person name="Hasegawa T."/>
            <person name="Tokumitsu H."/>
        </authorList>
    </citation>
    <scope>INTERACTION WITH TPPP</scope>
</reference>
<reference key="24">
    <citation type="journal article" date="2002" name="Structure">
        <title>Crystal structures of S100A6 in the Ca(2+)-free and Ca(2+)-bound states: the calcium sensor mechanism of S100 proteins revealed at atomic resolution.</title>
        <authorList>
            <person name="Otterbein L.R."/>
            <person name="Kordowska J."/>
            <person name="Witte-Hoffmann C."/>
            <person name="Wang C.-L.A."/>
            <person name="Dominguez R."/>
        </authorList>
    </citation>
    <scope>X-RAY CRYSTALLOGRAPHY (1.15 ANGSTROMS)</scope>
    <scope>SUBUNIT</scope>
    <scope>CALCIUM-BINDING</scope>
</reference>
<protein>
    <recommendedName>
        <fullName>Protein S100-A6</fullName>
    </recommendedName>
    <alternativeName>
        <fullName>Calcyclin</fullName>
    </alternativeName>
    <alternativeName>
        <fullName>Growth factor-inducible protein 2A9</fullName>
    </alternativeName>
    <alternativeName>
        <fullName>MLN 4</fullName>
    </alternativeName>
    <alternativeName>
        <fullName>Prolactin receptor-associated protein</fullName>
        <shortName>PRA</shortName>
    </alternativeName>
    <alternativeName>
        <fullName>S100 calcium-binding protein A6</fullName>
    </alternativeName>
</protein>
<feature type="chain" id="PRO_0000143984" description="Protein S100-A6">
    <location>
        <begin position="1"/>
        <end position="90"/>
    </location>
</feature>
<feature type="domain" description="EF-hand 1" evidence="11">
    <location>
        <begin position="12"/>
        <end position="47"/>
    </location>
</feature>
<feature type="domain" description="EF-hand 2" evidence="2">
    <location>
        <begin position="48"/>
        <end position="83"/>
    </location>
</feature>
<feature type="binding site" evidence="11">
    <location>
        <position position="28"/>
    </location>
    <ligand>
        <name>Ca(2+)</name>
        <dbReference type="ChEBI" id="CHEBI:29108"/>
        <label>1</label>
    </ligand>
</feature>
<feature type="binding site" evidence="11">
    <location>
        <position position="33"/>
    </location>
    <ligand>
        <name>Ca(2+)</name>
        <dbReference type="ChEBI" id="CHEBI:29108"/>
        <label>1</label>
    </ligand>
</feature>
<feature type="binding site" evidence="2">
    <location>
        <position position="61"/>
    </location>
    <ligand>
        <name>Ca(2+)</name>
        <dbReference type="ChEBI" id="CHEBI:29108"/>
        <label>2</label>
    </ligand>
</feature>
<feature type="binding site" evidence="2">
    <location>
        <position position="63"/>
    </location>
    <ligand>
        <name>Ca(2+)</name>
        <dbReference type="ChEBI" id="CHEBI:29108"/>
        <label>2</label>
    </ligand>
</feature>
<feature type="binding site" evidence="2">
    <location>
        <position position="65"/>
    </location>
    <ligand>
        <name>Ca(2+)</name>
        <dbReference type="ChEBI" id="CHEBI:29108"/>
        <label>2</label>
    </ligand>
</feature>
<feature type="binding site" evidence="2">
    <location>
        <position position="67"/>
    </location>
    <ligand>
        <name>Ca(2+)</name>
        <dbReference type="ChEBI" id="CHEBI:29108"/>
        <label>2</label>
    </ligand>
</feature>
<feature type="binding site" evidence="2">
    <location>
        <position position="72"/>
    </location>
    <ligand>
        <name>Ca(2+)</name>
        <dbReference type="ChEBI" id="CHEBI:29108"/>
        <label>2</label>
    </ligand>
</feature>
<feature type="modified residue" description="N6-acetyllysine" evidence="12">
    <location>
        <position position="40"/>
    </location>
</feature>
<feature type="modified residue" description="Phosphoserine" evidence="13">
    <location>
        <position position="46"/>
    </location>
</feature>
<feature type="modified residue" description="N6-acetyllysine; alternate" evidence="1">
    <location>
        <position position="47"/>
    </location>
</feature>
<feature type="modified residue" description="N6-succinyllysine; alternate" evidence="1">
    <location>
        <position position="47"/>
    </location>
</feature>
<feature type="sequence variant" id="VAR_011982" description="In dbSNP:rs11974.">
    <original>H</original>
    <variation>R</variation>
    <location>
        <position position="27"/>
    </location>
</feature>
<feature type="sequence variant" id="VAR_011983" description="In dbSNP:rs1802581.">
    <original>N</original>
    <variation>S</variation>
    <location>
        <position position="69"/>
    </location>
</feature>
<feature type="sequence variant" id="VAR_011984" description="In dbSNP:rs1802582.">
    <original>I</original>
    <variation>T</variation>
    <location>
        <position position="83"/>
    </location>
</feature>
<feature type="sequence variant" id="VAR_029281" description="In dbSNP:rs2228293.">
    <original>G</original>
    <variation>D</variation>
    <location>
        <position position="90"/>
    </location>
</feature>
<feature type="helix" evidence="14">
    <location>
        <begin position="4"/>
        <end position="20"/>
    </location>
</feature>
<feature type="strand" evidence="14">
    <location>
        <begin position="22"/>
        <end position="24"/>
    </location>
</feature>
<feature type="strand" evidence="14">
    <location>
        <begin position="28"/>
        <end position="30"/>
    </location>
</feature>
<feature type="helix" evidence="14">
    <location>
        <begin position="31"/>
        <end position="41"/>
    </location>
</feature>
<feature type="helix" evidence="14">
    <location>
        <begin position="45"/>
        <end position="47"/>
    </location>
</feature>
<feature type="helix" evidence="14">
    <location>
        <begin position="51"/>
        <end position="62"/>
    </location>
</feature>
<feature type="turn" evidence="14">
    <location>
        <begin position="63"/>
        <end position="65"/>
    </location>
</feature>
<feature type="strand" evidence="14">
    <location>
        <begin position="67"/>
        <end position="69"/>
    </location>
</feature>
<feature type="helix" evidence="14">
    <location>
        <begin position="70"/>
        <end position="84"/>
    </location>
</feature>
<feature type="helix" evidence="14">
    <location>
        <begin position="86"/>
        <end position="88"/>
    </location>
</feature>
<dbReference type="EMBL" id="M14300">
    <property type="protein sequence ID" value="AAA35886.1"/>
    <property type="molecule type" value="mRNA"/>
</dbReference>
<dbReference type="EMBL" id="J02763">
    <property type="protein sequence ID" value="AAA51905.1"/>
    <property type="molecule type" value="Genomic_DNA"/>
</dbReference>
<dbReference type="EMBL" id="M18981">
    <property type="protein sequence ID" value="AAA51906.1"/>
    <property type="molecule type" value="mRNA"/>
</dbReference>
<dbReference type="EMBL" id="AY034480">
    <property type="protein sequence ID" value="AAK59702.1"/>
    <property type="molecule type" value="Genomic_DNA"/>
</dbReference>
<dbReference type="EMBL" id="BT006965">
    <property type="protein sequence ID" value="AAP35611.1"/>
    <property type="molecule type" value="mRNA"/>
</dbReference>
<dbReference type="EMBL" id="BX470102">
    <property type="status" value="NOT_ANNOTATED_CDS"/>
    <property type="molecule type" value="Genomic_DNA"/>
</dbReference>
<dbReference type="EMBL" id="CH471121">
    <property type="protein sequence ID" value="EAW53318.1"/>
    <property type="molecule type" value="Genomic_DNA"/>
</dbReference>
<dbReference type="EMBL" id="CH471121">
    <property type="protein sequence ID" value="EAW53320.1"/>
    <property type="molecule type" value="Genomic_DNA"/>
</dbReference>
<dbReference type="EMBL" id="CH471121">
    <property type="protein sequence ID" value="EAW53321.1"/>
    <property type="molecule type" value="Genomic_DNA"/>
</dbReference>
<dbReference type="EMBL" id="CH471121">
    <property type="protein sequence ID" value="EAW53322.1"/>
    <property type="molecule type" value="Genomic_DNA"/>
</dbReference>
<dbReference type="EMBL" id="CH471121">
    <property type="protein sequence ID" value="EAW53323.1"/>
    <property type="molecule type" value="Genomic_DNA"/>
</dbReference>
<dbReference type="EMBL" id="CH471121">
    <property type="protein sequence ID" value="EAW53324.1"/>
    <property type="molecule type" value="Genomic_DNA"/>
</dbReference>
<dbReference type="EMBL" id="CH471121">
    <property type="protein sequence ID" value="EAW53325.1"/>
    <property type="molecule type" value="Genomic_DNA"/>
</dbReference>
<dbReference type="EMBL" id="CH471121">
    <property type="protein sequence ID" value="EAW53326.1"/>
    <property type="molecule type" value="Genomic_DNA"/>
</dbReference>
<dbReference type="EMBL" id="BC001431">
    <property type="protein sequence ID" value="AAH01431.1"/>
    <property type="molecule type" value="mRNA"/>
</dbReference>
<dbReference type="EMBL" id="BC009017">
    <property type="protein sequence ID" value="AAH09017.1"/>
    <property type="molecule type" value="mRNA"/>
</dbReference>
<dbReference type="CCDS" id="CCDS1040.1"/>
<dbReference type="PIR" id="A28363">
    <property type="entry name" value="BCHUY"/>
</dbReference>
<dbReference type="RefSeq" id="NP_055439.1">
    <property type="nucleotide sequence ID" value="NM_014624.4"/>
</dbReference>
<dbReference type="RefSeq" id="XP_016857522.1">
    <property type="nucleotide sequence ID" value="XM_017002033.2"/>
</dbReference>
<dbReference type="RefSeq" id="XP_054194088.1">
    <property type="nucleotide sequence ID" value="XM_054338113.1"/>
</dbReference>
<dbReference type="PDB" id="1K8U">
    <property type="method" value="X-ray"/>
    <property type="resolution" value="1.15 A"/>
    <property type="chains" value="A=1-90"/>
</dbReference>
<dbReference type="PDB" id="1K96">
    <property type="method" value="X-ray"/>
    <property type="resolution" value="1.44 A"/>
    <property type="chains" value="A=1-90"/>
</dbReference>
<dbReference type="PDB" id="1K9K">
    <property type="method" value="X-ray"/>
    <property type="resolution" value="1.76 A"/>
    <property type="chains" value="A/B=1-90"/>
</dbReference>
<dbReference type="PDB" id="1K9P">
    <property type="method" value="X-ray"/>
    <property type="resolution" value="1.90 A"/>
    <property type="chains" value="A=1-90"/>
</dbReference>
<dbReference type="PDB" id="2M1K">
    <property type="method" value="NMR"/>
    <property type="chains" value="B/D=1-90"/>
</dbReference>
<dbReference type="PDB" id="4YBH">
    <property type="method" value="X-ray"/>
    <property type="resolution" value="2.40 A"/>
    <property type="chains" value="B=1-90"/>
</dbReference>
<dbReference type="PDBsum" id="1K8U"/>
<dbReference type="PDBsum" id="1K96"/>
<dbReference type="PDBsum" id="1K9K"/>
<dbReference type="PDBsum" id="1K9P"/>
<dbReference type="PDBsum" id="2M1K"/>
<dbReference type="PDBsum" id="4YBH"/>
<dbReference type="BMRB" id="P06703"/>
<dbReference type="SMR" id="P06703"/>
<dbReference type="BioGRID" id="112185">
    <property type="interactions" value="277"/>
</dbReference>
<dbReference type="CORUM" id="P06703"/>
<dbReference type="FunCoup" id="P06703">
    <property type="interactions" value="409"/>
</dbReference>
<dbReference type="IntAct" id="P06703">
    <property type="interactions" value="169"/>
</dbReference>
<dbReference type="MINT" id="P06703"/>
<dbReference type="STRING" id="9606.ENSP00000357709"/>
<dbReference type="DrugBank" id="DB11093">
    <property type="generic name" value="Calcium citrate"/>
</dbReference>
<dbReference type="DrugBank" id="DB11348">
    <property type="generic name" value="Calcium Phosphate"/>
</dbReference>
<dbReference type="DrugBank" id="DB14481">
    <property type="generic name" value="Calcium phosphate dihydrate"/>
</dbReference>
<dbReference type="GlyGen" id="P06703">
    <property type="glycosylation" value="1 site, 1 O-linked glycan (1 site)"/>
</dbReference>
<dbReference type="iPTMnet" id="P06703"/>
<dbReference type="MetOSite" id="P06703"/>
<dbReference type="PhosphoSitePlus" id="P06703"/>
<dbReference type="SwissPalm" id="P06703"/>
<dbReference type="BioMuta" id="S100A6"/>
<dbReference type="DMDM" id="116509"/>
<dbReference type="jPOST" id="P06703"/>
<dbReference type="MassIVE" id="P06703"/>
<dbReference type="PaxDb" id="9606-ENSP00000357709"/>
<dbReference type="PeptideAtlas" id="P06703"/>
<dbReference type="ProteomicsDB" id="51911"/>
<dbReference type="Pumba" id="P06703"/>
<dbReference type="TopDownProteomics" id="P06703"/>
<dbReference type="Antibodypedia" id="1680">
    <property type="antibodies" value="536 antibodies from 40 providers"/>
</dbReference>
<dbReference type="CPTC" id="P06703">
    <property type="antibodies" value="3 antibodies"/>
</dbReference>
<dbReference type="DNASU" id="6277"/>
<dbReference type="Ensembl" id="ENST00000368719.9">
    <property type="protein sequence ID" value="ENSP00000357708.3"/>
    <property type="gene ID" value="ENSG00000197956.10"/>
</dbReference>
<dbReference type="Ensembl" id="ENST00000368720.6">
    <property type="protein sequence ID" value="ENSP00000357709.1"/>
    <property type="gene ID" value="ENSG00000197956.10"/>
</dbReference>
<dbReference type="Ensembl" id="ENST00000496817.5">
    <property type="protein sequence ID" value="ENSP00000473589.1"/>
    <property type="gene ID" value="ENSG00000197956.10"/>
</dbReference>
<dbReference type="GeneID" id="6277"/>
<dbReference type="KEGG" id="hsa:6277"/>
<dbReference type="MANE-Select" id="ENST00000368719.9">
    <property type="protein sequence ID" value="ENSP00000357708.3"/>
    <property type="RefSeq nucleotide sequence ID" value="NM_014624.4"/>
    <property type="RefSeq protein sequence ID" value="NP_055439.1"/>
</dbReference>
<dbReference type="UCSC" id="uc001fbw.2">
    <property type="organism name" value="human"/>
</dbReference>
<dbReference type="AGR" id="HGNC:10496"/>
<dbReference type="CTD" id="6277"/>
<dbReference type="DisGeNET" id="6277"/>
<dbReference type="GeneCards" id="S100A6"/>
<dbReference type="HGNC" id="HGNC:10496">
    <property type="gene designation" value="S100A6"/>
</dbReference>
<dbReference type="HPA" id="ENSG00000197956">
    <property type="expression patterns" value="Low tissue specificity"/>
</dbReference>
<dbReference type="MIM" id="114110">
    <property type="type" value="gene"/>
</dbReference>
<dbReference type="neXtProt" id="NX_P06703"/>
<dbReference type="OpenTargets" id="ENSG00000197956"/>
<dbReference type="PharmGKB" id="PA34908"/>
<dbReference type="VEuPathDB" id="HostDB:ENSG00000197956"/>
<dbReference type="eggNOG" id="ENOG502S6IN">
    <property type="taxonomic scope" value="Eukaryota"/>
</dbReference>
<dbReference type="GeneTree" id="ENSGT00940000161896"/>
<dbReference type="InParanoid" id="P06703"/>
<dbReference type="OMA" id="LVVICHK"/>
<dbReference type="OrthoDB" id="8881129at2759"/>
<dbReference type="PAN-GO" id="P06703">
    <property type="GO annotations" value="5 GO annotations based on evolutionary models"/>
</dbReference>
<dbReference type="PhylomeDB" id="P06703"/>
<dbReference type="TreeFam" id="TF332727"/>
<dbReference type="PathwayCommons" id="P06703"/>
<dbReference type="SignaLink" id="P06703"/>
<dbReference type="SIGNOR" id="P06703"/>
<dbReference type="BioGRID-ORCS" id="6277">
    <property type="hits" value="19 hits in 1158 CRISPR screens"/>
</dbReference>
<dbReference type="ChiTaRS" id="S100A6">
    <property type="organism name" value="human"/>
</dbReference>
<dbReference type="EvolutionaryTrace" id="P06703"/>
<dbReference type="GeneWiki" id="S100A6"/>
<dbReference type="GenomeRNAi" id="6277"/>
<dbReference type="Pharos" id="P06703">
    <property type="development level" value="Tbio"/>
</dbReference>
<dbReference type="PRO" id="PR:P06703"/>
<dbReference type="Proteomes" id="UP000005640">
    <property type="component" value="Chromosome 1"/>
</dbReference>
<dbReference type="RNAct" id="P06703">
    <property type="molecule type" value="protein"/>
</dbReference>
<dbReference type="Bgee" id="ENSG00000197956">
    <property type="expression patterns" value="Expressed in calcaneal tendon and 197 other cell types or tissues"/>
</dbReference>
<dbReference type="ExpressionAtlas" id="P06703">
    <property type="expression patterns" value="baseline and differential"/>
</dbReference>
<dbReference type="GO" id="GO:0062023">
    <property type="term" value="C:collagen-containing extracellular matrix"/>
    <property type="evidence" value="ECO:0007005"/>
    <property type="project" value="BHF-UCL"/>
</dbReference>
<dbReference type="GO" id="GO:0005737">
    <property type="term" value="C:cytoplasm"/>
    <property type="evidence" value="ECO:0000314"/>
    <property type="project" value="UniProtKB"/>
</dbReference>
<dbReference type="GO" id="GO:0009898">
    <property type="term" value="C:cytoplasmic side of plasma membrane"/>
    <property type="evidence" value="ECO:0000314"/>
    <property type="project" value="UniProtKB"/>
</dbReference>
<dbReference type="GO" id="GO:0005829">
    <property type="term" value="C:cytosol"/>
    <property type="evidence" value="ECO:0000314"/>
    <property type="project" value="UniProtKB"/>
</dbReference>
<dbReference type="GO" id="GO:0070062">
    <property type="term" value="C:extracellular exosome"/>
    <property type="evidence" value="ECO:0007005"/>
    <property type="project" value="UniProtKB"/>
</dbReference>
<dbReference type="GO" id="GO:0005576">
    <property type="term" value="C:extracellular region"/>
    <property type="evidence" value="ECO:0007005"/>
    <property type="project" value="BHF-UCL"/>
</dbReference>
<dbReference type="GO" id="GO:0005635">
    <property type="term" value="C:nuclear envelope"/>
    <property type="evidence" value="ECO:0000314"/>
    <property type="project" value="UniProtKB"/>
</dbReference>
<dbReference type="GO" id="GO:0005634">
    <property type="term" value="C:nucleus"/>
    <property type="evidence" value="ECO:0000314"/>
    <property type="project" value="UniProtKB"/>
</dbReference>
<dbReference type="GO" id="GO:0048471">
    <property type="term" value="C:perinuclear region of cytoplasm"/>
    <property type="evidence" value="ECO:0000314"/>
    <property type="project" value="UniProtKB"/>
</dbReference>
<dbReference type="GO" id="GO:0005886">
    <property type="term" value="C:plasma membrane"/>
    <property type="evidence" value="ECO:0000314"/>
    <property type="project" value="HPA"/>
</dbReference>
<dbReference type="GO" id="GO:0001726">
    <property type="term" value="C:ruffle"/>
    <property type="evidence" value="ECO:0000314"/>
    <property type="project" value="UniProtKB"/>
</dbReference>
<dbReference type="GO" id="GO:0005509">
    <property type="term" value="F:calcium ion binding"/>
    <property type="evidence" value="ECO:0000314"/>
    <property type="project" value="UniProtKB"/>
</dbReference>
<dbReference type="GO" id="GO:0048306">
    <property type="term" value="F:calcium-dependent protein binding"/>
    <property type="evidence" value="ECO:0000314"/>
    <property type="project" value="UniProtKB"/>
</dbReference>
<dbReference type="GO" id="GO:0015075">
    <property type="term" value="F:monoatomic ion transmembrane transporter activity"/>
    <property type="evidence" value="ECO:0007669"/>
    <property type="project" value="Ensembl"/>
</dbReference>
<dbReference type="GO" id="GO:0042803">
    <property type="term" value="F:protein homodimerization activity"/>
    <property type="evidence" value="ECO:0000314"/>
    <property type="project" value="UniProtKB"/>
</dbReference>
<dbReference type="GO" id="GO:0044548">
    <property type="term" value="F:S100 protein binding"/>
    <property type="evidence" value="ECO:0000353"/>
    <property type="project" value="UniProtKB"/>
</dbReference>
<dbReference type="GO" id="GO:0005523">
    <property type="term" value="F:tropomyosin binding"/>
    <property type="evidence" value="ECO:0000314"/>
    <property type="project" value="UniProtKB"/>
</dbReference>
<dbReference type="GO" id="GO:0008270">
    <property type="term" value="F:zinc ion binding"/>
    <property type="evidence" value="ECO:0007669"/>
    <property type="project" value="Ensembl"/>
</dbReference>
<dbReference type="GO" id="GO:0007409">
    <property type="term" value="P:axonogenesis"/>
    <property type="evidence" value="ECO:0000303"/>
    <property type="project" value="UniProtKB"/>
</dbReference>
<dbReference type="GO" id="GO:0048146">
    <property type="term" value="P:positive regulation of fibroblast proliferation"/>
    <property type="evidence" value="ECO:0000303"/>
    <property type="project" value="UniProtKB"/>
</dbReference>
<dbReference type="GO" id="GO:0007165">
    <property type="term" value="P:signal transduction"/>
    <property type="evidence" value="ECO:0000304"/>
    <property type="project" value="UniProtKB"/>
</dbReference>
<dbReference type="CDD" id="cd05029">
    <property type="entry name" value="S-100A6"/>
    <property type="match status" value="1"/>
</dbReference>
<dbReference type="FunFam" id="1.10.238.10:FF:000044">
    <property type="entry name" value="Protein S100"/>
    <property type="match status" value="1"/>
</dbReference>
<dbReference type="Gene3D" id="1.10.238.10">
    <property type="entry name" value="EF-hand"/>
    <property type="match status" value="1"/>
</dbReference>
<dbReference type="InterPro" id="IPR011992">
    <property type="entry name" value="EF-hand-dom_pair"/>
</dbReference>
<dbReference type="InterPro" id="IPR018247">
    <property type="entry name" value="EF_Hand_1_Ca_BS"/>
</dbReference>
<dbReference type="InterPro" id="IPR002048">
    <property type="entry name" value="EF_hand_dom"/>
</dbReference>
<dbReference type="InterPro" id="IPR034118">
    <property type="entry name" value="S-100A6"/>
</dbReference>
<dbReference type="InterPro" id="IPR001751">
    <property type="entry name" value="S100/CaBP7/8-like_CS"/>
</dbReference>
<dbReference type="InterPro" id="IPR013787">
    <property type="entry name" value="S100_Ca-bd_sub"/>
</dbReference>
<dbReference type="PANTHER" id="PTHR11639:SF80">
    <property type="entry name" value="PROTEIN S100-A6"/>
    <property type="match status" value="1"/>
</dbReference>
<dbReference type="PANTHER" id="PTHR11639">
    <property type="entry name" value="S100 CALCIUM-BINDING PROTEIN"/>
    <property type="match status" value="1"/>
</dbReference>
<dbReference type="Pfam" id="PF01023">
    <property type="entry name" value="S_100"/>
    <property type="match status" value="1"/>
</dbReference>
<dbReference type="SMART" id="SM00054">
    <property type="entry name" value="EFh"/>
    <property type="match status" value="1"/>
</dbReference>
<dbReference type="SMART" id="SM01394">
    <property type="entry name" value="S_100"/>
    <property type="match status" value="1"/>
</dbReference>
<dbReference type="SUPFAM" id="SSF47473">
    <property type="entry name" value="EF-hand"/>
    <property type="match status" value="1"/>
</dbReference>
<dbReference type="PROSITE" id="PS00018">
    <property type="entry name" value="EF_HAND_1"/>
    <property type="match status" value="1"/>
</dbReference>
<dbReference type="PROSITE" id="PS50222">
    <property type="entry name" value="EF_HAND_2"/>
    <property type="match status" value="1"/>
</dbReference>
<dbReference type="PROSITE" id="PS00303">
    <property type="entry name" value="S100_CABP"/>
    <property type="match status" value="1"/>
</dbReference>
<evidence type="ECO:0000250" key="1">
    <source>
        <dbReference type="UniProtKB" id="P14069"/>
    </source>
</evidence>
<evidence type="ECO:0000255" key="2">
    <source>
        <dbReference type="PROSITE-ProRule" id="PRU00448"/>
    </source>
</evidence>
<evidence type="ECO:0000269" key="3">
    <source>
    </source>
</evidence>
<evidence type="ECO:0000269" key="4">
    <source>
    </source>
</evidence>
<evidence type="ECO:0000269" key="5">
    <source>
    </source>
</evidence>
<evidence type="ECO:0000269" key="6">
    <source>
    </source>
</evidence>
<evidence type="ECO:0000269" key="7">
    <source>
    </source>
</evidence>
<evidence type="ECO:0000269" key="8">
    <source>
    </source>
</evidence>
<evidence type="ECO:0000269" key="9">
    <source>
    </source>
</evidence>
<evidence type="ECO:0000269" key="10">
    <source>
    </source>
</evidence>
<evidence type="ECO:0000305" key="11"/>
<evidence type="ECO:0007744" key="12">
    <source>
    </source>
</evidence>
<evidence type="ECO:0007744" key="13">
    <source>
    </source>
</evidence>
<evidence type="ECO:0007829" key="14">
    <source>
        <dbReference type="PDB" id="1K8U"/>
    </source>
</evidence>
<organism>
    <name type="scientific">Homo sapiens</name>
    <name type="common">Human</name>
    <dbReference type="NCBI Taxonomy" id="9606"/>
    <lineage>
        <taxon>Eukaryota</taxon>
        <taxon>Metazoa</taxon>
        <taxon>Chordata</taxon>
        <taxon>Craniata</taxon>
        <taxon>Vertebrata</taxon>
        <taxon>Euteleostomi</taxon>
        <taxon>Mammalia</taxon>
        <taxon>Eutheria</taxon>
        <taxon>Euarchontoglires</taxon>
        <taxon>Primates</taxon>
        <taxon>Haplorrhini</taxon>
        <taxon>Catarrhini</taxon>
        <taxon>Hominidae</taxon>
        <taxon>Homo</taxon>
    </lineage>
</organism>
<comment type="function">
    <text evidence="8">May function as calcium sensor and modulator, contributing to cellular calcium signaling. May function by interacting with other proteins, such as TPR-containing proteins, and indirectly play a role in many physiological processes such as the reorganization of the actin cytoskeleton and in cell motility. Binds 2 calcium ions. Calcium binding is cooperative.</text>
</comment>
<comment type="subunit">
    <text evidence="3 4 5 6 7 8 9 10">Homodimer; head to tail assembly of 2 subunits. Interacts with CACYBP in a calcium-dependent manner. Interacts with ANXA2 and ANXA11 (via N-terminus). Interacts with SUGT1. Interacts with TP53; has higher affinity for TP53 that is phosphorylated on its N-terminal domain, and lower affinity for TP53 that is phosphorylated on its C-terminal domain. Interacts with tropomyosin. Interacts with FKBP4. Interacts with PPP5C (via TPR repeats); the interaction is calcium-dependent and modulates PPP5C activity. Interacts with TPPP; this interaction inhibits TPPP dimerization (PubMed:33831707).</text>
</comment>
<comment type="interaction">
    <interactant intactId="EBI-352877">
        <id>P06703</id>
    </interactant>
    <interactant intactId="EBI-1047302">
        <id>Q9HB71</id>
        <label>CACYBP</label>
    </interactant>
    <organismsDiffer>false</organismsDiffer>
    <experiments>3</experiments>
</comment>
<comment type="interaction">
    <interactant intactId="EBI-352877">
        <id>P06703</id>
    </interactant>
    <interactant intactId="EBI-1266334">
        <id>O95684</id>
        <label>CEP43</label>
    </interactant>
    <organismsDiffer>false</organismsDiffer>
    <experiments>2</experiments>
</comment>
<comment type="interaction">
    <interactant intactId="EBI-352877">
        <id>P06703</id>
    </interactant>
    <interactant intactId="EBI-14240149">
        <id>B3EWG3</id>
        <label>FAM25A</label>
    </interactant>
    <organismsDiffer>false</organismsDiffer>
    <experiments>3</experiments>
</comment>
<comment type="interaction">
    <interactant intactId="EBI-352877">
        <id>P06703</id>
    </interactant>
    <interactant intactId="EBI-1047444">
        <id>Q02790</id>
        <label>FKBP4</label>
    </interactant>
    <organismsDiffer>false</organismsDiffer>
    <experiments>3</experiments>
</comment>
<comment type="interaction">
    <interactant intactId="EBI-352877">
        <id>P06703</id>
    </interactant>
    <interactant intactId="EBI-349938">
        <id>P52292</id>
        <label>KPNA2</label>
    </interactant>
    <organismsDiffer>false</organismsDiffer>
    <experiments>3</experiments>
</comment>
<comment type="interaction">
    <interactant intactId="EBI-352877">
        <id>P06703</id>
    </interactant>
    <interactant intactId="EBI-389668">
        <id>Q00987</id>
        <label>MDM2</label>
    </interactant>
    <organismsDiffer>false</organismsDiffer>
    <experiments>2</experiments>
</comment>
<comment type="interaction">
    <interactant intactId="EBI-352877">
        <id>P06703</id>
    </interactant>
    <interactant intactId="EBI-350338">
        <id>P35579</id>
        <label>MYH9</label>
    </interactant>
    <organismsDiffer>false</organismsDiffer>
    <experiments>2</experiments>
</comment>
<comment type="interaction">
    <interactant intactId="EBI-352877">
        <id>P06703</id>
    </interactant>
    <interactant intactId="EBI-597835">
        <id>P50542</id>
        <label>PEX5</label>
    </interactant>
    <organismsDiffer>false</organismsDiffer>
    <experiments>3</experiments>
</comment>
<comment type="interaction">
    <interactant intactId="EBI-352877">
        <id>P06703</id>
    </interactant>
    <interactant intactId="EBI-458391">
        <id>P04271</id>
        <label>S100B</label>
    </interactant>
    <organismsDiffer>false</organismsDiffer>
    <experiments>6</experiments>
</comment>
<comment type="interaction">
    <interactant intactId="EBI-352877">
        <id>P06703</id>
    </interactant>
    <interactant intactId="EBI-366083">
        <id>P04637</id>
        <label>TP53</label>
    </interactant>
    <organismsDiffer>false</organismsDiffer>
    <experiments>3</experiments>
</comment>
<comment type="interaction">
    <interactant intactId="EBI-352877">
        <id>P06703</id>
    </interactant>
    <interactant intactId="EBI-11723041">
        <id>Q8TD43</id>
        <label>TRPM4</label>
    </interactant>
    <organismsDiffer>false</organismsDiffer>
    <experiments>2</experiments>
</comment>
<comment type="interaction">
    <interactant intactId="EBI-352877">
        <id>P06703</id>
    </interactant>
    <interactant intactId="EBI-1045061">
        <id>P61960</id>
        <label>UFM1</label>
    </interactant>
    <organismsDiffer>false</organismsDiffer>
    <experiments>2</experiments>
</comment>
<comment type="interaction">
    <interactant intactId="EBI-352877">
        <id>P06703</id>
    </interactant>
    <interactant intactId="EBI-6477155">
        <id>P26882</id>
        <label>PPID</label>
    </interactant>
    <organismsDiffer>true</organismsDiffer>
    <experiments>3</experiments>
</comment>
<comment type="subcellular location">
    <subcellularLocation>
        <location>Nucleus envelope</location>
    </subcellularLocation>
    <subcellularLocation>
        <location>Cytoplasm</location>
    </subcellularLocation>
    <subcellularLocation>
        <location>Cell membrane</location>
        <topology>Peripheral membrane protein</topology>
        <orientation>Cytoplasmic side</orientation>
    </subcellularLocation>
</comment>
<comment type="induction">
    <text>Preferentially expressed when quiescent fibroblasts are stimulated to proliferate. It is inducible by growth factors and overexpressed in acute myeloid leukemias.</text>
</comment>
<comment type="PTM">
    <text>The N-terminus is blocked.</text>
</comment>
<comment type="miscellaneous">
    <text>This protein co-purified with the prolactin receptor.</text>
</comment>
<comment type="similarity">
    <text evidence="11">Belongs to the S-100 family.</text>
</comment>
<sequence>MACPLDQAIGLLVAIFHKYSGREGDKHTLSKKELKELIQKELTIGSKLQDAEIARLMEDLDRNKDQEVNFQEYVTFLGALALIYNEALKG</sequence>
<gene>
    <name type="primary">S100A6</name>
    <name type="synonym">CACY</name>
</gene>
<keyword id="KW-0002">3D-structure</keyword>
<keyword id="KW-0007">Acetylation</keyword>
<keyword id="KW-0106">Calcium</keyword>
<keyword id="KW-1003">Cell membrane</keyword>
<keyword id="KW-0963">Cytoplasm</keyword>
<keyword id="KW-0903">Direct protein sequencing</keyword>
<keyword id="KW-0472">Membrane</keyword>
<keyword id="KW-0479">Metal-binding</keyword>
<keyword id="KW-0539">Nucleus</keyword>
<keyword id="KW-0597">Phosphoprotein</keyword>
<keyword id="KW-1267">Proteomics identification</keyword>
<keyword id="KW-1185">Reference proteome</keyword>
<keyword id="KW-0677">Repeat</keyword>
<proteinExistence type="evidence at protein level"/>
<accession>P06703</accession>
<accession>D3DV39</accession>
<accession>Q5RHS4</accession>
<name>S10A6_HUMAN</name>